<reference key="1">
    <citation type="journal article" date="2004" name="Proc. Natl. Acad. Sci. U.S.A.">
        <title>The louse-borne human pathogen Bartonella quintana is a genomic derivative of the zoonotic agent Bartonella henselae.</title>
        <authorList>
            <person name="Alsmark U.C.M."/>
            <person name="Frank A.C."/>
            <person name="Karlberg E.O."/>
            <person name="Legault B.-A."/>
            <person name="Ardell D.H."/>
            <person name="Canbaeck B."/>
            <person name="Eriksson A.-S."/>
            <person name="Naeslund A.K."/>
            <person name="Handley S.A."/>
            <person name="Huvet M."/>
            <person name="La Scola B."/>
            <person name="Holmberg M."/>
            <person name="Andersson S.G.E."/>
        </authorList>
    </citation>
    <scope>NUCLEOTIDE SEQUENCE [LARGE SCALE GENOMIC DNA]</scope>
    <source>
        <strain>Toulouse</strain>
    </source>
</reference>
<name>PYRE_BARQU</name>
<evidence type="ECO:0000255" key="1">
    <source>
        <dbReference type="HAMAP-Rule" id="MF_01208"/>
    </source>
</evidence>
<feature type="chain" id="PRO_1000066208" description="Orotate phosphoribosyltransferase">
    <location>
        <begin position="1"/>
        <end position="192"/>
    </location>
</feature>
<feature type="binding site" evidence="1">
    <location>
        <begin position="116"/>
        <end position="124"/>
    </location>
    <ligand>
        <name>5-phospho-alpha-D-ribose 1-diphosphate</name>
        <dbReference type="ChEBI" id="CHEBI:58017"/>
    </ligand>
</feature>
<feature type="binding site" evidence="1">
    <location>
        <position position="120"/>
    </location>
    <ligand>
        <name>orotate</name>
        <dbReference type="ChEBI" id="CHEBI:30839"/>
    </ligand>
</feature>
<feature type="binding site" evidence="1">
    <location>
        <position position="148"/>
    </location>
    <ligand>
        <name>orotate</name>
        <dbReference type="ChEBI" id="CHEBI:30839"/>
    </ligand>
</feature>
<comment type="function">
    <text evidence="1">Catalyzes the transfer of a ribosyl phosphate group from 5-phosphoribose 1-diphosphate to orotate, leading to the formation of orotidine monophosphate (OMP).</text>
</comment>
<comment type="catalytic activity">
    <reaction evidence="1">
        <text>orotidine 5'-phosphate + diphosphate = orotate + 5-phospho-alpha-D-ribose 1-diphosphate</text>
        <dbReference type="Rhea" id="RHEA:10380"/>
        <dbReference type="ChEBI" id="CHEBI:30839"/>
        <dbReference type="ChEBI" id="CHEBI:33019"/>
        <dbReference type="ChEBI" id="CHEBI:57538"/>
        <dbReference type="ChEBI" id="CHEBI:58017"/>
        <dbReference type="EC" id="2.4.2.10"/>
    </reaction>
</comment>
<comment type="cofactor">
    <cofactor evidence="1">
        <name>Mg(2+)</name>
        <dbReference type="ChEBI" id="CHEBI:18420"/>
    </cofactor>
</comment>
<comment type="pathway">
    <text evidence="1">Pyrimidine metabolism; UMP biosynthesis via de novo pathway; UMP from orotate: step 1/2.</text>
</comment>
<comment type="subunit">
    <text evidence="1">Homodimer.</text>
</comment>
<comment type="similarity">
    <text evidence="1">Belongs to the purine/pyrimidine phosphoribosyltransferase family. PyrE subfamily.</text>
</comment>
<proteinExistence type="inferred from homology"/>
<keyword id="KW-0328">Glycosyltransferase</keyword>
<keyword id="KW-0460">Magnesium</keyword>
<keyword id="KW-0665">Pyrimidine biosynthesis</keyword>
<keyword id="KW-0808">Transferase</keyword>
<accession>Q6G086</accession>
<sequence>MNTQDVIDIFKQADAILEGHFILTSGRHSAIYMQKAQVFMHADLTEKLCRGLAEKIKRSIKEKIDYVVGPAIGGLIPSYETSRHLGIPSLWVERVNGIFELRRFKIKNGARVVIVEDIVTTGLSIRETVEALVAAGADVVASACILDRSGGKVDVGVPLIALAEYEIVSYASDALPTELALLPAVKPGSRNI</sequence>
<dbReference type="EC" id="2.4.2.10" evidence="1"/>
<dbReference type="EMBL" id="BX897700">
    <property type="protein sequence ID" value="CAF25923.1"/>
    <property type="molecule type" value="Genomic_DNA"/>
</dbReference>
<dbReference type="RefSeq" id="WP_011179212.1">
    <property type="nucleotide sequence ID" value="NC_005955.1"/>
</dbReference>
<dbReference type="SMR" id="Q6G086"/>
<dbReference type="KEGG" id="bqu:BQ04240"/>
<dbReference type="eggNOG" id="COG0461">
    <property type="taxonomic scope" value="Bacteria"/>
</dbReference>
<dbReference type="HOGENOM" id="CLU_074878_3_0_5"/>
<dbReference type="OrthoDB" id="9783570at2"/>
<dbReference type="UniPathway" id="UPA00070">
    <property type="reaction ID" value="UER00119"/>
</dbReference>
<dbReference type="Proteomes" id="UP000000597">
    <property type="component" value="Chromosome"/>
</dbReference>
<dbReference type="GO" id="GO:0000287">
    <property type="term" value="F:magnesium ion binding"/>
    <property type="evidence" value="ECO:0007669"/>
    <property type="project" value="UniProtKB-UniRule"/>
</dbReference>
<dbReference type="GO" id="GO:0004588">
    <property type="term" value="F:orotate phosphoribosyltransferase activity"/>
    <property type="evidence" value="ECO:0007669"/>
    <property type="project" value="UniProtKB-UniRule"/>
</dbReference>
<dbReference type="GO" id="GO:0044205">
    <property type="term" value="P:'de novo' UMP biosynthetic process"/>
    <property type="evidence" value="ECO:0007669"/>
    <property type="project" value="UniProtKB-UniRule"/>
</dbReference>
<dbReference type="GO" id="GO:0019856">
    <property type="term" value="P:pyrimidine nucleobase biosynthetic process"/>
    <property type="evidence" value="ECO:0007669"/>
    <property type="project" value="InterPro"/>
</dbReference>
<dbReference type="CDD" id="cd06223">
    <property type="entry name" value="PRTases_typeI"/>
    <property type="match status" value="1"/>
</dbReference>
<dbReference type="Gene3D" id="3.40.50.2020">
    <property type="match status" value="1"/>
</dbReference>
<dbReference type="HAMAP" id="MF_01208">
    <property type="entry name" value="PyrE"/>
    <property type="match status" value="1"/>
</dbReference>
<dbReference type="InterPro" id="IPR023031">
    <property type="entry name" value="OPRT"/>
</dbReference>
<dbReference type="InterPro" id="IPR006273">
    <property type="entry name" value="Orotate_PRibTrfase_bac"/>
</dbReference>
<dbReference type="InterPro" id="IPR000836">
    <property type="entry name" value="PRibTrfase_dom"/>
</dbReference>
<dbReference type="InterPro" id="IPR029057">
    <property type="entry name" value="PRTase-like"/>
</dbReference>
<dbReference type="NCBIfam" id="TIGR01367">
    <property type="entry name" value="pyrE_Therm"/>
    <property type="match status" value="1"/>
</dbReference>
<dbReference type="PANTHER" id="PTHR19278">
    <property type="entry name" value="OROTATE PHOSPHORIBOSYLTRANSFERASE"/>
    <property type="match status" value="1"/>
</dbReference>
<dbReference type="PANTHER" id="PTHR19278:SF9">
    <property type="entry name" value="URIDINE 5'-MONOPHOSPHATE SYNTHASE"/>
    <property type="match status" value="1"/>
</dbReference>
<dbReference type="Pfam" id="PF00156">
    <property type="entry name" value="Pribosyltran"/>
    <property type="match status" value="1"/>
</dbReference>
<dbReference type="SUPFAM" id="SSF53271">
    <property type="entry name" value="PRTase-like"/>
    <property type="match status" value="1"/>
</dbReference>
<dbReference type="PROSITE" id="PS00103">
    <property type="entry name" value="PUR_PYR_PR_TRANSFER"/>
    <property type="match status" value="1"/>
</dbReference>
<organism>
    <name type="scientific">Bartonella quintana (strain Toulouse)</name>
    <name type="common">Rochalimaea quintana</name>
    <dbReference type="NCBI Taxonomy" id="283165"/>
    <lineage>
        <taxon>Bacteria</taxon>
        <taxon>Pseudomonadati</taxon>
        <taxon>Pseudomonadota</taxon>
        <taxon>Alphaproteobacteria</taxon>
        <taxon>Hyphomicrobiales</taxon>
        <taxon>Bartonellaceae</taxon>
        <taxon>Bartonella</taxon>
    </lineage>
</organism>
<protein>
    <recommendedName>
        <fullName evidence="1">Orotate phosphoribosyltransferase</fullName>
        <shortName evidence="1">OPRT</shortName>
        <shortName evidence="1">OPRTase</shortName>
        <ecNumber evidence="1">2.4.2.10</ecNumber>
    </recommendedName>
</protein>
<gene>
    <name evidence="1" type="primary">pyrE</name>
    <name type="ordered locus">BQ04240</name>
</gene>